<sequence length="570" mass="63615">MIPPEIRRSVLLQKAIKLALAGTLLTFASFSATAADPSSDTETPQPPDILLGPLFNDVQNAKLFPDQKTFADAIPNSDPLMILADYRMQRNQSGFDLRHFVDVNFTLPKAGEKYVPPAGQSLREHIDGLWPVLTRSTKNVEKWDSLLPLPESYVVPGGRFREIYYWDSYFTMLGLAESGHWDKVADMVANFGYEIDAWGHIPNGNRTYYLSRSQPPFFAFMVELLAQHEGDDALKEYLPQLQKEYAYWMEGVETLQPGQQNQRVVKLEDGSVLNRYWDDRDTPRPESWVEDIATVKSNPNRPATEIYRDLRSAAASGWDFSSRWMDNPQQLSTIRTTTIVPVDLNALLYQLEKTLARASAAAGDRAKASHYDALANARQKAIEMHLWNNKEGWYADYDLKNNKIRDQLTAAALFPLYVNAAAKDRAAKVAAAAQAHLLQPGGLATTSVKSGQQWDAPNGWAPLQWVAAEGLQNYGQDDVAMEVTWRFLTNVQHTYDREKKLVEKYDVSSTGTGGGGGEYPLQDGFGWTNGVTLKMLDLICPQEKPCDSVPSTRPASLSATPTKTPSAATQ</sequence>
<comment type="function">
    <text evidence="1">Provides the cells with the ability to utilize trehalose at high osmolarity by splitting it into glucose molecules that can subsequently be taken up by the phosphotransferase-mediated uptake system.</text>
</comment>
<comment type="catalytic activity">
    <reaction evidence="1">
        <text>alpha,alpha-trehalose + H2O = alpha-D-glucose + beta-D-glucose</text>
        <dbReference type="Rhea" id="RHEA:32675"/>
        <dbReference type="ChEBI" id="CHEBI:15377"/>
        <dbReference type="ChEBI" id="CHEBI:15903"/>
        <dbReference type="ChEBI" id="CHEBI:16551"/>
        <dbReference type="ChEBI" id="CHEBI:17925"/>
        <dbReference type="EC" id="3.2.1.28"/>
    </reaction>
</comment>
<comment type="subunit">
    <text evidence="1">Monomer.</text>
</comment>
<comment type="subcellular location">
    <subcellularLocation>
        <location evidence="1">Periplasm</location>
    </subcellularLocation>
</comment>
<comment type="similarity">
    <text evidence="1">Belongs to the glycosyl hydrolase 37 family.</text>
</comment>
<evidence type="ECO:0000255" key="1">
    <source>
        <dbReference type="HAMAP-Rule" id="MF_01060"/>
    </source>
</evidence>
<evidence type="ECO:0000256" key="2">
    <source>
        <dbReference type="SAM" id="MobiDB-lite"/>
    </source>
</evidence>
<feature type="signal peptide" evidence="1">
    <location>
        <begin position="1"/>
        <end position="34"/>
    </location>
</feature>
<feature type="chain" id="PRO_5000398158" description="Periplasmic trehalase">
    <location>
        <begin position="35"/>
        <end position="570"/>
    </location>
</feature>
<feature type="region of interest" description="Disordered" evidence="2">
    <location>
        <begin position="544"/>
        <end position="570"/>
    </location>
</feature>
<feature type="compositionally biased region" description="Low complexity" evidence="2">
    <location>
        <begin position="554"/>
        <end position="570"/>
    </location>
</feature>
<feature type="active site" description="Proton donor/acceptor" evidence="1">
    <location>
        <position position="319"/>
    </location>
</feature>
<feature type="active site" description="Proton donor/acceptor" evidence="1">
    <location>
        <position position="503"/>
    </location>
</feature>
<feature type="binding site" evidence="1">
    <location>
        <position position="159"/>
    </location>
    <ligand>
        <name>substrate</name>
    </ligand>
</feature>
<feature type="binding site" evidence="1">
    <location>
        <begin position="166"/>
        <end position="167"/>
    </location>
    <ligand>
        <name>substrate</name>
    </ligand>
</feature>
<feature type="binding site" evidence="1">
    <location>
        <position position="203"/>
    </location>
    <ligand>
        <name>substrate</name>
    </ligand>
</feature>
<feature type="binding site" evidence="1">
    <location>
        <begin position="212"/>
        <end position="214"/>
    </location>
    <ligand>
        <name>substrate</name>
    </ligand>
</feature>
<feature type="binding site" evidence="1">
    <location>
        <begin position="284"/>
        <end position="286"/>
    </location>
    <ligand>
        <name>substrate</name>
    </ligand>
</feature>
<feature type="binding site" evidence="1">
    <location>
        <position position="317"/>
    </location>
    <ligand>
        <name>substrate</name>
    </ligand>
</feature>
<feature type="binding site" evidence="1">
    <location>
        <position position="518"/>
    </location>
    <ligand>
        <name>substrate</name>
    </ligand>
</feature>
<dbReference type="EC" id="3.2.1.28" evidence="1"/>
<dbReference type="EMBL" id="AM933173">
    <property type="protein sequence ID" value="CAR37197.1"/>
    <property type="molecule type" value="Genomic_DNA"/>
</dbReference>
<dbReference type="RefSeq" id="WP_000612838.1">
    <property type="nucleotide sequence ID" value="NC_011274.1"/>
</dbReference>
<dbReference type="SMR" id="B5R904"/>
<dbReference type="CAZy" id="GH37">
    <property type="family name" value="Glycoside Hydrolase Family 37"/>
</dbReference>
<dbReference type="KEGG" id="seg:SG1320"/>
<dbReference type="HOGENOM" id="CLU_006451_3_1_6"/>
<dbReference type="Proteomes" id="UP000008321">
    <property type="component" value="Chromosome"/>
</dbReference>
<dbReference type="GO" id="GO:0042597">
    <property type="term" value="C:periplasmic space"/>
    <property type="evidence" value="ECO:0007669"/>
    <property type="project" value="UniProtKB-SubCell"/>
</dbReference>
<dbReference type="GO" id="GO:0004555">
    <property type="term" value="F:alpha,alpha-trehalase activity"/>
    <property type="evidence" value="ECO:0007669"/>
    <property type="project" value="UniProtKB-UniRule"/>
</dbReference>
<dbReference type="GO" id="GO:0071474">
    <property type="term" value="P:cellular hyperosmotic response"/>
    <property type="evidence" value="ECO:0007669"/>
    <property type="project" value="InterPro"/>
</dbReference>
<dbReference type="GO" id="GO:0005993">
    <property type="term" value="P:trehalose catabolic process"/>
    <property type="evidence" value="ECO:0007669"/>
    <property type="project" value="InterPro"/>
</dbReference>
<dbReference type="FunFam" id="1.50.10.10:FF:000003">
    <property type="entry name" value="Cytoplasmic trehalase"/>
    <property type="match status" value="1"/>
</dbReference>
<dbReference type="Gene3D" id="1.50.10.10">
    <property type="match status" value="1"/>
</dbReference>
<dbReference type="HAMAP" id="MF_01060">
    <property type="entry name" value="Peripl_trehalase"/>
    <property type="match status" value="1"/>
</dbReference>
<dbReference type="InterPro" id="IPR008928">
    <property type="entry name" value="6-hairpin_glycosidase_sf"/>
</dbReference>
<dbReference type="InterPro" id="IPR012341">
    <property type="entry name" value="6hp_glycosidase-like_sf"/>
</dbReference>
<dbReference type="InterPro" id="IPR001661">
    <property type="entry name" value="Glyco_hydro_37"/>
</dbReference>
<dbReference type="InterPro" id="IPR018232">
    <property type="entry name" value="Glyco_hydro_37_CS"/>
</dbReference>
<dbReference type="InterPro" id="IPR023720">
    <property type="entry name" value="Trehalase_periplasmic"/>
</dbReference>
<dbReference type="NCBIfam" id="NF009773">
    <property type="entry name" value="PRK13270.1"/>
    <property type="match status" value="1"/>
</dbReference>
<dbReference type="NCBIfam" id="NF009774">
    <property type="entry name" value="PRK13271.1"/>
    <property type="match status" value="1"/>
</dbReference>
<dbReference type="PANTHER" id="PTHR23403">
    <property type="entry name" value="TREHALASE"/>
    <property type="match status" value="1"/>
</dbReference>
<dbReference type="PANTHER" id="PTHR23403:SF1">
    <property type="entry name" value="TREHALASE"/>
    <property type="match status" value="1"/>
</dbReference>
<dbReference type="Pfam" id="PF01204">
    <property type="entry name" value="Trehalase"/>
    <property type="match status" value="1"/>
</dbReference>
<dbReference type="PRINTS" id="PR00744">
    <property type="entry name" value="GLHYDRLASE37"/>
</dbReference>
<dbReference type="SUPFAM" id="SSF48208">
    <property type="entry name" value="Six-hairpin glycosidases"/>
    <property type="match status" value="1"/>
</dbReference>
<dbReference type="PROSITE" id="PS00927">
    <property type="entry name" value="TREHALASE_1"/>
    <property type="match status" value="1"/>
</dbReference>
<dbReference type="PROSITE" id="PS00928">
    <property type="entry name" value="TREHALASE_2"/>
    <property type="match status" value="1"/>
</dbReference>
<accession>B5R904</accession>
<organism>
    <name type="scientific">Salmonella gallinarum (strain 287/91 / NCTC 13346)</name>
    <dbReference type="NCBI Taxonomy" id="550538"/>
    <lineage>
        <taxon>Bacteria</taxon>
        <taxon>Pseudomonadati</taxon>
        <taxon>Pseudomonadota</taxon>
        <taxon>Gammaproteobacteria</taxon>
        <taxon>Enterobacterales</taxon>
        <taxon>Enterobacteriaceae</taxon>
        <taxon>Salmonella</taxon>
    </lineage>
</organism>
<keyword id="KW-0326">Glycosidase</keyword>
<keyword id="KW-0378">Hydrolase</keyword>
<keyword id="KW-0574">Periplasm</keyword>
<keyword id="KW-0732">Signal</keyword>
<name>TREA_SALG2</name>
<gene>
    <name evidence="1" type="primary">treA</name>
    <name type="ordered locus">SG1320</name>
</gene>
<protein>
    <recommendedName>
        <fullName evidence="1">Periplasmic trehalase</fullName>
        <ecNumber evidence="1">3.2.1.28</ecNumber>
    </recommendedName>
    <alternativeName>
        <fullName evidence="1">Alpha,alpha-trehalase</fullName>
    </alternativeName>
    <alternativeName>
        <fullName evidence="1">Alpha,alpha-trehalose glucohydrolase</fullName>
    </alternativeName>
</protein>
<reference key="1">
    <citation type="journal article" date="2008" name="Genome Res.">
        <title>Comparative genome analysis of Salmonella enteritidis PT4 and Salmonella gallinarum 287/91 provides insights into evolutionary and host adaptation pathways.</title>
        <authorList>
            <person name="Thomson N.R."/>
            <person name="Clayton D.J."/>
            <person name="Windhorst D."/>
            <person name="Vernikos G."/>
            <person name="Davidson S."/>
            <person name="Churcher C."/>
            <person name="Quail M.A."/>
            <person name="Stevens M."/>
            <person name="Jones M.A."/>
            <person name="Watson M."/>
            <person name="Barron A."/>
            <person name="Layton A."/>
            <person name="Pickard D."/>
            <person name="Kingsley R.A."/>
            <person name="Bignell A."/>
            <person name="Clark L."/>
            <person name="Harris B."/>
            <person name="Ormond D."/>
            <person name="Abdellah Z."/>
            <person name="Brooks K."/>
            <person name="Cherevach I."/>
            <person name="Chillingworth T."/>
            <person name="Woodward J."/>
            <person name="Norberczak H."/>
            <person name="Lord A."/>
            <person name="Arrowsmith C."/>
            <person name="Jagels K."/>
            <person name="Moule S."/>
            <person name="Mungall K."/>
            <person name="Saunders M."/>
            <person name="Whitehead S."/>
            <person name="Chabalgoity J.A."/>
            <person name="Maskell D."/>
            <person name="Humphreys T."/>
            <person name="Roberts M."/>
            <person name="Barrow P.A."/>
            <person name="Dougan G."/>
            <person name="Parkhill J."/>
        </authorList>
    </citation>
    <scope>NUCLEOTIDE SEQUENCE [LARGE SCALE GENOMIC DNA]</scope>
    <source>
        <strain>287/91 / NCTC 13346</strain>
    </source>
</reference>
<proteinExistence type="inferred from homology"/>